<comment type="function">
    <text evidence="1">Involved in the gluconeogenesis. Catalyzes the conversion of oxaloacetate (OAA) to phosphoenolpyruvate (PEP) through direct phosphoryl transfer between the nucleoside triphosphate and OAA.</text>
</comment>
<comment type="catalytic activity">
    <reaction evidence="1">
        <text>oxaloacetate + ATP = phosphoenolpyruvate + ADP + CO2</text>
        <dbReference type="Rhea" id="RHEA:18617"/>
        <dbReference type="ChEBI" id="CHEBI:16452"/>
        <dbReference type="ChEBI" id="CHEBI:16526"/>
        <dbReference type="ChEBI" id="CHEBI:30616"/>
        <dbReference type="ChEBI" id="CHEBI:58702"/>
        <dbReference type="ChEBI" id="CHEBI:456216"/>
        <dbReference type="EC" id="4.1.1.49"/>
    </reaction>
</comment>
<comment type="cofactor">
    <cofactor evidence="1">
        <name>Mn(2+)</name>
        <dbReference type="ChEBI" id="CHEBI:29035"/>
    </cofactor>
    <text evidence="1">Binds 1 Mn(2+) ion per subunit.</text>
</comment>
<comment type="pathway">
    <text evidence="1">Carbohydrate biosynthesis; gluconeogenesis.</text>
</comment>
<comment type="subunit">
    <text evidence="1">Monomer.</text>
</comment>
<comment type="subcellular location">
    <subcellularLocation>
        <location evidence="1">Cytoplasm</location>
    </subcellularLocation>
</comment>
<comment type="similarity">
    <text evidence="1">Belongs to the phosphoenolpyruvate carboxykinase (ATP) family.</text>
</comment>
<protein>
    <recommendedName>
        <fullName evidence="1">Phosphoenolpyruvate carboxykinase (ATP)</fullName>
        <shortName evidence="1">PCK</shortName>
        <shortName evidence="1">PEP carboxykinase</shortName>
        <shortName evidence="1">PEPCK</shortName>
        <ecNumber evidence="1">4.1.1.49</ecNumber>
    </recommendedName>
</protein>
<reference key="1">
    <citation type="journal article" date="2003" name="Genome Res.">
        <title>Comparative genome analysis of Vibrio vulnificus, a marine pathogen.</title>
        <authorList>
            <person name="Chen C.-Y."/>
            <person name="Wu K.-M."/>
            <person name="Chang Y.-C."/>
            <person name="Chang C.-H."/>
            <person name="Tsai H.-C."/>
            <person name="Liao T.-L."/>
            <person name="Liu Y.-M."/>
            <person name="Chen H.-J."/>
            <person name="Shen A.B.-T."/>
            <person name="Li J.-C."/>
            <person name="Su T.-L."/>
            <person name="Shao C.-P."/>
            <person name="Lee C.-T."/>
            <person name="Hor L.-I."/>
            <person name="Tsai S.-F."/>
        </authorList>
    </citation>
    <scope>NUCLEOTIDE SEQUENCE [LARGE SCALE GENOMIC DNA]</scope>
    <source>
        <strain>YJ016</strain>
    </source>
</reference>
<evidence type="ECO:0000255" key="1">
    <source>
        <dbReference type="HAMAP-Rule" id="MF_00453"/>
    </source>
</evidence>
<accession>Q7MQ03</accession>
<proteinExistence type="inferred from homology"/>
<keyword id="KW-0067">ATP-binding</keyword>
<keyword id="KW-0963">Cytoplasm</keyword>
<keyword id="KW-0210">Decarboxylase</keyword>
<keyword id="KW-0312">Gluconeogenesis</keyword>
<keyword id="KW-0456">Lyase</keyword>
<keyword id="KW-0464">Manganese</keyword>
<keyword id="KW-0479">Metal-binding</keyword>
<keyword id="KW-0547">Nucleotide-binding</keyword>
<feature type="chain" id="PRO_0000203857" description="Phosphoenolpyruvate carboxykinase (ATP)">
    <location>
        <begin position="1"/>
        <end position="542"/>
    </location>
</feature>
<feature type="binding site" evidence="1">
    <location>
        <position position="67"/>
    </location>
    <ligand>
        <name>substrate</name>
    </ligand>
</feature>
<feature type="binding site" evidence="1">
    <location>
        <position position="208"/>
    </location>
    <ligand>
        <name>substrate</name>
    </ligand>
</feature>
<feature type="binding site" evidence="1">
    <location>
        <position position="214"/>
    </location>
    <ligand>
        <name>ATP</name>
        <dbReference type="ChEBI" id="CHEBI:30616"/>
    </ligand>
</feature>
<feature type="binding site" evidence="1">
    <location>
        <position position="214"/>
    </location>
    <ligand>
        <name>Mn(2+)</name>
        <dbReference type="ChEBI" id="CHEBI:29035"/>
    </ligand>
</feature>
<feature type="binding site" evidence="1">
    <location>
        <position position="214"/>
    </location>
    <ligand>
        <name>substrate</name>
    </ligand>
</feature>
<feature type="binding site" evidence="1">
    <location>
        <position position="233"/>
    </location>
    <ligand>
        <name>ATP</name>
        <dbReference type="ChEBI" id="CHEBI:30616"/>
    </ligand>
</feature>
<feature type="binding site" evidence="1">
    <location>
        <position position="233"/>
    </location>
    <ligand>
        <name>Mn(2+)</name>
        <dbReference type="ChEBI" id="CHEBI:29035"/>
    </ligand>
</feature>
<feature type="binding site" evidence="1">
    <location>
        <begin position="249"/>
        <end position="257"/>
    </location>
    <ligand>
        <name>ATP</name>
        <dbReference type="ChEBI" id="CHEBI:30616"/>
    </ligand>
</feature>
<feature type="binding site" evidence="1">
    <location>
        <position position="270"/>
    </location>
    <ligand>
        <name>Mn(2+)</name>
        <dbReference type="ChEBI" id="CHEBI:29035"/>
    </ligand>
</feature>
<feature type="binding site" evidence="1">
    <location>
        <position position="298"/>
    </location>
    <ligand>
        <name>ATP</name>
        <dbReference type="ChEBI" id="CHEBI:30616"/>
    </ligand>
</feature>
<feature type="binding site" evidence="1">
    <location>
        <position position="334"/>
    </location>
    <ligand>
        <name>ATP</name>
        <dbReference type="ChEBI" id="CHEBI:30616"/>
    </ligand>
</feature>
<feature type="binding site" evidence="1">
    <location>
        <position position="334"/>
    </location>
    <ligand>
        <name>substrate</name>
    </ligand>
</feature>
<feature type="binding site" evidence="1">
    <location>
        <begin position="450"/>
        <end position="451"/>
    </location>
    <ligand>
        <name>ATP</name>
        <dbReference type="ChEBI" id="CHEBI:30616"/>
    </ligand>
</feature>
<feature type="binding site" evidence="1">
    <location>
        <position position="456"/>
    </location>
    <ligand>
        <name>ATP</name>
        <dbReference type="ChEBI" id="CHEBI:30616"/>
    </ligand>
</feature>
<gene>
    <name evidence="1" type="primary">pckA</name>
    <name type="ordered locus">VV0207</name>
</gene>
<sequence length="542" mass="59964">MTVMEHTKAASIDLTKHGLRNVKEVVRNPSYEMLFAEETRADLEGYEKGVVTELGAVAVDTGIFTGRSPKDKYIVKDATTEEHMWWTTPAVPNDNKPITQEVWNDLKQLVTNQLSGKRVFVIDGYCGANPDTRLSIRVITEVAWQAHFVKNMFIRPTEEELASFEPDFVVMNGAKCTNQKWKEHGLNSENFTVFNLTERMQLIGGTWYGGEMKKGMFAMMNYFLPLKGIASMHCSANMGKEGDVAIFFGLSGTGKTTLSTDPKRALIGDDEHGWDDDGVFNFEGGCYAKTIKLSKEAEPDIYNAIRRNALLENVTVRNDGSINFDDGSKTENTRVSYPIHHIENIVKPVSKGGHANKVIFLSADAFGVLPPVSKLTPEQTKYHFLSGFTAKLAGTERGITEPTPTFSACFGAAFLTLHPTKYAEVLVKRMEEAGAEAYLVNTGWNGSGKRISIQDTRGIIDAILDGSIEEAPTKHVPIFNLEVPTSLPGVDPTILDPRDTYVDPLQWESKAQDLAQRFINNFAKYTDNAEGQSLVAAGPQLD</sequence>
<dbReference type="EC" id="4.1.1.49" evidence="1"/>
<dbReference type="EMBL" id="BA000037">
    <property type="protein sequence ID" value="BAC92971.1"/>
    <property type="molecule type" value="Genomic_DNA"/>
</dbReference>
<dbReference type="RefSeq" id="WP_011149198.1">
    <property type="nucleotide sequence ID" value="NC_005139.1"/>
</dbReference>
<dbReference type="SMR" id="Q7MQ03"/>
<dbReference type="STRING" id="672.VV93_v1c01920"/>
<dbReference type="KEGG" id="vvy:VV0207"/>
<dbReference type="PATRIC" id="fig|196600.6.peg.249"/>
<dbReference type="eggNOG" id="COG1866">
    <property type="taxonomic scope" value="Bacteria"/>
</dbReference>
<dbReference type="HOGENOM" id="CLU_018247_0_1_6"/>
<dbReference type="UniPathway" id="UPA00138"/>
<dbReference type="Proteomes" id="UP000002675">
    <property type="component" value="Chromosome I"/>
</dbReference>
<dbReference type="GO" id="GO:0005829">
    <property type="term" value="C:cytosol"/>
    <property type="evidence" value="ECO:0007669"/>
    <property type="project" value="TreeGrafter"/>
</dbReference>
<dbReference type="GO" id="GO:0005524">
    <property type="term" value="F:ATP binding"/>
    <property type="evidence" value="ECO:0007669"/>
    <property type="project" value="UniProtKB-UniRule"/>
</dbReference>
<dbReference type="GO" id="GO:0046872">
    <property type="term" value="F:metal ion binding"/>
    <property type="evidence" value="ECO:0007669"/>
    <property type="project" value="UniProtKB-KW"/>
</dbReference>
<dbReference type="GO" id="GO:0004612">
    <property type="term" value="F:phosphoenolpyruvate carboxykinase (ATP) activity"/>
    <property type="evidence" value="ECO:0007669"/>
    <property type="project" value="UniProtKB-UniRule"/>
</dbReference>
<dbReference type="GO" id="GO:0006094">
    <property type="term" value="P:gluconeogenesis"/>
    <property type="evidence" value="ECO:0007669"/>
    <property type="project" value="UniProtKB-UniRule"/>
</dbReference>
<dbReference type="CDD" id="cd00484">
    <property type="entry name" value="PEPCK_ATP"/>
    <property type="match status" value="1"/>
</dbReference>
<dbReference type="FunFam" id="2.170.8.10:FF:000001">
    <property type="entry name" value="Phosphoenolpyruvate carboxykinase (ATP)"/>
    <property type="match status" value="1"/>
</dbReference>
<dbReference type="FunFam" id="3.40.449.10:FF:000001">
    <property type="entry name" value="Phosphoenolpyruvate carboxykinase (ATP)"/>
    <property type="match status" value="1"/>
</dbReference>
<dbReference type="Gene3D" id="3.90.228.20">
    <property type="match status" value="1"/>
</dbReference>
<dbReference type="Gene3D" id="3.40.449.10">
    <property type="entry name" value="Phosphoenolpyruvate Carboxykinase, domain 1"/>
    <property type="match status" value="1"/>
</dbReference>
<dbReference type="Gene3D" id="2.170.8.10">
    <property type="entry name" value="Phosphoenolpyruvate Carboxykinase, domain 2"/>
    <property type="match status" value="1"/>
</dbReference>
<dbReference type="HAMAP" id="MF_00453">
    <property type="entry name" value="PEPCK_ATP"/>
    <property type="match status" value="1"/>
</dbReference>
<dbReference type="InterPro" id="IPR001272">
    <property type="entry name" value="PEP_carboxykinase_ATP"/>
</dbReference>
<dbReference type="InterPro" id="IPR013035">
    <property type="entry name" value="PEP_carboxykinase_C"/>
</dbReference>
<dbReference type="InterPro" id="IPR008210">
    <property type="entry name" value="PEP_carboxykinase_N"/>
</dbReference>
<dbReference type="InterPro" id="IPR015994">
    <property type="entry name" value="PEPCK_ATP_CS"/>
</dbReference>
<dbReference type="NCBIfam" id="TIGR00224">
    <property type="entry name" value="pckA"/>
    <property type="match status" value="1"/>
</dbReference>
<dbReference type="NCBIfam" id="NF006819">
    <property type="entry name" value="PRK09344.1-1"/>
    <property type="match status" value="1"/>
</dbReference>
<dbReference type="NCBIfam" id="NF006820">
    <property type="entry name" value="PRK09344.1-2"/>
    <property type="match status" value="1"/>
</dbReference>
<dbReference type="NCBIfam" id="NF006821">
    <property type="entry name" value="PRK09344.1-3"/>
    <property type="match status" value="1"/>
</dbReference>
<dbReference type="PANTHER" id="PTHR30031:SF0">
    <property type="entry name" value="PHOSPHOENOLPYRUVATE CARBOXYKINASE (ATP)"/>
    <property type="match status" value="1"/>
</dbReference>
<dbReference type="PANTHER" id="PTHR30031">
    <property type="entry name" value="PHOSPHOENOLPYRUVATE CARBOXYKINASE ATP"/>
    <property type="match status" value="1"/>
</dbReference>
<dbReference type="Pfam" id="PF01293">
    <property type="entry name" value="PEPCK_ATP"/>
    <property type="match status" value="1"/>
</dbReference>
<dbReference type="PIRSF" id="PIRSF006294">
    <property type="entry name" value="PEP_crbxkin"/>
    <property type="match status" value="1"/>
</dbReference>
<dbReference type="SUPFAM" id="SSF68923">
    <property type="entry name" value="PEP carboxykinase N-terminal domain"/>
    <property type="match status" value="1"/>
</dbReference>
<dbReference type="SUPFAM" id="SSF53795">
    <property type="entry name" value="PEP carboxykinase-like"/>
    <property type="match status" value="1"/>
</dbReference>
<dbReference type="PROSITE" id="PS00532">
    <property type="entry name" value="PEPCK_ATP"/>
    <property type="match status" value="1"/>
</dbReference>
<name>PCKA_VIBVY</name>
<organism>
    <name type="scientific">Vibrio vulnificus (strain YJ016)</name>
    <dbReference type="NCBI Taxonomy" id="196600"/>
    <lineage>
        <taxon>Bacteria</taxon>
        <taxon>Pseudomonadati</taxon>
        <taxon>Pseudomonadota</taxon>
        <taxon>Gammaproteobacteria</taxon>
        <taxon>Vibrionales</taxon>
        <taxon>Vibrionaceae</taxon>
        <taxon>Vibrio</taxon>
    </lineage>
</organism>